<keyword id="KW-0067">ATP-binding</keyword>
<keyword id="KW-0238">DNA-binding</keyword>
<keyword id="KW-0479">Metal-binding</keyword>
<keyword id="KW-0547">Nucleotide-binding</keyword>
<keyword id="KW-0678">Repressor</keyword>
<keyword id="KW-0804">Transcription</keyword>
<keyword id="KW-0805">Transcription regulation</keyword>
<keyword id="KW-0862">Zinc</keyword>
<keyword id="KW-0863">Zinc-finger</keyword>
<gene>
    <name evidence="1" type="primary">nrdR</name>
    <name type="ordered locus">EcolC_3220</name>
</gene>
<comment type="function">
    <text evidence="1">Negatively regulates transcription of bacterial ribonucleotide reductase nrd genes and operons by binding to NrdR-boxes.</text>
</comment>
<comment type="cofactor">
    <cofactor evidence="1">
        <name>Zn(2+)</name>
        <dbReference type="ChEBI" id="CHEBI:29105"/>
    </cofactor>
    <text evidence="1">Binds 1 zinc ion.</text>
</comment>
<comment type="similarity">
    <text evidence="1">Belongs to the NrdR family.</text>
</comment>
<organism>
    <name type="scientific">Escherichia coli (strain ATCC 8739 / DSM 1576 / NBRC 3972 / NCIMB 8545 / WDCM 00012 / Crooks)</name>
    <dbReference type="NCBI Taxonomy" id="481805"/>
    <lineage>
        <taxon>Bacteria</taxon>
        <taxon>Pseudomonadati</taxon>
        <taxon>Pseudomonadota</taxon>
        <taxon>Gammaproteobacteria</taxon>
        <taxon>Enterobacterales</taxon>
        <taxon>Enterobacteriaceae</taxon>
        <taxon>Escherichia</taxon>
    </lineage>
</organism>
<name>NRDR_ECOLC</name>
<reference key="1">
    <citation type="submission" date="2008-02" db="EMBL/GenBank/DDBJ databases">
        <title>Complete sequence of Escherichia coli C str. ATCC 8739.</title>
        <authorList>
            <person name="Copeland A."/>
            <person name="Lucas S."/>
            <person name="Lapidus A."/>
            <person name="Glavina del Rio T."/>
            <person name="Dalin E."/>
            <person name="Tice H."/>
            <person name="Bruce D."/>
            <person name="Goodwin L."/>
            <person name="Pitluck S."/>
            <person name="Kiss H."/>
            <person name="Brettin T."/>
            <person name="Detter J.C."/>
            <person name="Han C."/>
            <person name="Kuske C.R."/>
            <person name="Schmutz J."/>
            <person name="Larimer F."/>
            <person name="Land M."/>
            <person name="Hauser L."/>
            <person name="Kyrpides N."/>
            <person name="Mikhailova N."/>
            <person name="Ingram L."/>
            <person name="Richardson P."/>
        </authorList>
    </citation>
    <scope>NUCLEOTIDE SEQUENCE [LARGE SCALE GENOMIC DNA]</scope>
    <source>
        <strain>ATCC 8739 / DSM 1576 / NBRC 3972 / NCIMB 8545 / WDCM 00012 / Crooks</strain>
    </source>
</reference>
<sequence length="149" mass="17229">MHCPFCFAVDTKVIDSRLVGEGSSVRRRRQCLVCNERFTTFEVAELVMPRVVKSNDVREPFNEEKLRSGMLRALEKRPVSSDDVEMAINHIKSQLRATGEREVPSKMIGNLVMEQLKKLDKVAYIRFASVYRSFEDIKEFGEEIARLED</sequence>
<feature type="chain" id="PRO_1000080748" description="Transcriptional repressor NrdR">
    <location>
        <begin position="1"/>
        <end position="149"/>
    </location>
</feature>
<feature type="domain" description="ATP-cone" evidence="1">
    <location>
        <begin position="49"/>
        <end position="139"/>
    </location>
</feature>
<feature type="zinc finger region" evidence="1">
    <location>
        <begin position="3"/>
        <end position="34"/>
    </location>
</feature>
<dbReference type="EMBL" id="CP000946">
    <property type="protein sequence ID" value="ACA78842.1"/>
    <property type="molecule type" value="Genomic_DNA"/>
</dbReference>
<dbReference type="RefSeq" id="WP_000543535.1">
    <property type="nucleotide sequence ID" value="NZ_MTFT01000010.1"/>
</dbReference>
<dbReference type="SMR" id="B1J036"/>
<dbReference type="GeneID" id="93777047"/>
<dbReference type="KEGG" id="ecl:EcolC_3220"/>
<dbReference type="HOGENOM" id="CLU_108412_0_0_6"/>
<dbReference type="GO" id="GO:0005524">
    <property type="term" value="F:ATP binding"/>
    <property type="evidence" value="ECO:0007669"/>
    <property type="project" value="UniProtKB-KW"/>
</dbReference>
<dbReference type="GO" id="GO:0003677">
    <property type="term" value="F:DNA binding"/>
    <property type="evidence" value="ECO:0007669"/>
    <property type="project" value="UniProtKB-KW"/>
</dbReference>
<dbReference type="GO" id="GO:0008270">
    <property type="term" value="F:zinc ion binding"/>
    <property type="evidence" value="ECO:0007669"/>
    <property type="project" value="UniProtKB-UniRule"/>
</dbReference>
<dbReference type="GO" id="GO:0045892">
    <property type="term" value="P:negative regulation of DNA-templated transcription"/>
    <property type="evidence" value="ECO:0007669"/>
    <property type="project" value="UniProtKB-UniRule"/>
</dbReference>
<dbReference type="HAMAP" id="MF_00440">
    <property type="entry name" value="NrdR"/>
    <property type="match status" value="1"/>
</dbReference>
<dbReference type="InterPro" id="IPR005144">
    <property type="entry name" value="ATP-cone_dom"/>
</dbReference>
<dbReference type="InterPro" id="IPR055173">
    <property type="entry name" value="NrdR-like_N"/>
</dbReference>
<dbReference type="InterPro" id="IPR003796">
    <property type="entry name" value="RNR_NrdR-like"/>
</dbReference>
<dbReference type="NCBIfam" id="TIGR00244">
    <property type="entry name" value="transcriptional regulator NrdR"/>
    <property type="match status" value="1"/>
</dbReference>
<dbReference type="PANTHER" id="PTHR30455">
    <property type="entry name" value="TRANSCRIPTIONAL REPRESSOR NRDR"/>
    <property type="match status" value="1"/>
</dbReference>
<dbReference type="PANTHER" id="PTHR30455:SF2">
    <property type="entry name" value="TRANSCRIPTIONAL REPRESSOR NRDR"/>
    <property type="match status" value="1"/>
</dbReference>
<dbReference type="Pfam" id="PF03477">
    <property type="entry name" value="ATP-cone"/>
    <property type="match status" value="1"/>
</dbReference>
<dbReference type="Pfam" id="PF22811">
    <property type="entry name" value="Zn_ribbon_NrdR"/>
    <property type="match status" value="1"/>
</dbReference>
<dbReference type="PROSITE" id="PS51161">
    <property type="entry name" value="ATP_CONE"/>
    <property type="match status" value="1"/>
</dbReference>
<evidence type="ECO:0000255" key="1">
    <source>
        <dbReference type="HAMAP-Rule" id="MF_00440"/>
    </source>
</evidence>
<proteinExistence type="inferred from homology"/>
<accession>B1J036</accession>
<protein>
    <recommendedName>
        <fullName evidence="1">Transcriptional repressor NrdR</fullName>
    </recommendedName>
</protein>